<sequence length="320" mass="34172">MDMATGAKEVVVVEAYEYEFDLENPFTSPADEPIASLLDAEGHHSPSVSAAASAARREAAGFISKVRYDGELDVHPRVAYLALNYVDRYLSKRQLACERNPWAPRLLAISCLTLAAKMQRAAAISAADIQRGEEFMFDEAKIQRMEQMVLNALEWRTRSVTPLAFLGFFLSACFPQPRHPALLDAIKARAVDLLLRVQPEVKMAEFSPSVAAAAALLAAAGEVAGAHLLGFEAGVAACPFVNSEKLRECGEVMAAACGVGPSWAAAATSAETPVTVLGHHRSASSESERTTTVGSAANSADAKRRCMGPPRQWGVGGPDE</sequence>
<comment type="similarity">
    <text evidence="2">Belongs to the cyclin family. Cyclin D subfamily.</text>
</comment>
<reference key="1">
    <citation type="journal article" date="2005" name="Nature">
        <title>The map-based sequence of the rice genome.</title>
        <authorList>
            <consortium name="International rice genome sequencing project (IRGSP)"/>
        </authorList>
    </citation>
    <scope>NUCLEOTIDE SEQUENCE [LARGE SCALE GENOMIC DNA]</scope>
    <source>
        <strain>cv. Nipponbare</strain>
    </source>
</reference>
<reference key="2">
    <citation type="journal article" date="2008" name="Nucleic Acids Res.">
        <title>The rice annotation project database (RAP-DB): 2008 update.</title>
        <authorList>
            <consortium name="The rice annotation project (RAP)"/>
        </authorList>
    </citation>
    <scope>GENOME REANNOTATION</scope>
    <source>
        <strain>cv. Nipponbare</strain>
    </source>
</reference>
<reference key="3">
    <citation type="journal article" date="2013" name="Rice">
        <title>Improvement of the Oryza sativa Nipponbare reference genome using next generation sequence and optical map data.</title>
        <authorList>
            <person name="Kawahara Y."/>
            <person name="de la Bastide M."/>
            <person name="Hamilton J.P."/>
            <person name="Kanamori H."/>
            <person name="McCombie W.R."/>
            <person name="Ouyang S."/>
            <person name="Schwartz D.C."/>
            <person name="Tanaka T."/>
            <person name="Wu J."/>
            <person name="Zhou S."/>
            <person name="Childs K.L."/>
            <person name="Davidson R.M."/>
            <person name="Lin H."/>
            <person name="Quesada-Ocampo L."/>
            <person name="Vaillancourt B."/>
            <person name="Sakai H."/>
            <person name="Lee S.S."/>
            <person name="Kim J."/>
            <person name="Numa H."/>
            <person name="Itoh T."/>
            <person name="Buell C.R."/>
            <person name="Matsumoto T."/>
        </authorList>
    </citation>
    <scope>GENOME REANNOTATION</scope>
    <source>
        <strain>cv. Nipponbare</strain>
    </source>
</reference>
<reference key="4">
    <citation type="journal article" date="2005" name="PLoS Biol.">
        <title>The genomes of Oryza sativa: a history of duplications.</title>
        <authorList>
            <person name="Yu J."/>
            <person name="Wang J."/>
            <person name="Lin W."/>
            <person name="Li S."/>
            <person name="Li H."/>
            <person name="Zhou J."/>
            <person name="Ni P."/>
            <person name="Dong W."/>
            <person name="Hu S."/>
            <person name="Zeng C."/>
            <person name="Zhang J."/>
            <person name="Zhang Y."/>
            <person name="Li R."/>
            <person name="Xu Z."/>
            <person name="Li S."/>
            <person name="Li X."/>
            <person name="Zheng H."/>
            <person name="Cong L."/>
            <person name="Lin L."/>
            <person name="Yin J."/>
            <person name="Geng J."/>
            <person name="Li G."/>
            <person name="Shi J."/>
            <person name="Liu J."/>
            <person name="Lv H."/>
            <person name="Li J."/>
            <person name="Wang J."/>
            <person name="Deng Y."/>
            <person name="Ran L."/>
            <person name="Shi X."/>
            <person name="Wang X."/>
            <person name="Wu Q."/>
            <person name="Li C."/>
            <person name="Ren X."/>
            <person name="Wang J."/>
            <person name="Wang X."/>
            <person name="Li D."/>
            <person name="Liu D."/>
            <person name="Zhang X."/>
            <person name="Ji Z."/>
            <person name="Zhao W."/>
            <person name="Sun Y."/>
            <person name="Zhang Z."/>
            <person name="Bao J."/>
            <person name="Han Y."/>
            <person name="Dong L."/>
            <person name="Ji J."/>
            <person name="Chen P."/>
            <person name="Wu S."/>
            <person name="Liu J."/>
            <person name="Xiao Y."/>
            <person name="Bu D."/>
            <person name="Tan J."/>
            <person name="Yang L."/>
            <person name="Ye C."/>
            <person name="Zhang J."/>
            <person name="Xu J."/>
            <person name="Zhou Y."/>
            <person name="Yu Y."/>
            <person name="Zhang B."/>
            <person name="Zhuang S."/>
            <person name="Wei H."/>
            <person name="Liu B."/>
            <person name="Lei M."/>
            <person name="Yu H."/>
            <person name="Li Y."/>
            <person name="Xu H."/>
            <person name="Wei S."/>
            <person name="He X."/>
            <person name="Fang L."/>
            <person name="Zhang Z."/>
            <person name="Zhang Y."/>
            <person name="Huang X."/>
            <person name="Su Z."/>
            <person name="Tong W."/>
            <person name="Li J."/>
            <person name="Tong Z."/>
            <person name="Li S."/>
            <person name="Ye J."/>
            <person name="Wang L."/>
            <person name="Fang L."/>
            <person name="Lei T."/>
            <person name="Chen C.-S."/>
            <person name="Chen H.-C."/>
            <person name="Xu Z."/>
            <person name="Li H."/>
            <person name="Huang H."/>
            <person name="Zhang F."/>
            <person name="Xu H."/>
            <person name="Li N."/>
            <person name="Zhao C."/>
            <person name="Li S."/>
            <person name="Dong L."/>
            <person name="Huang Y."/>
            <person name="Li L."/>
            <person name="Xi Y."/>
            <person name="Qi Q."/>
            <person name="Li W."/>
            <person name="Zhang B."/>
            <person name="Hu W."/>
            <person name="Zhang Y."/>
            <person name="Tian X."/>
            <person name="Jiao Y."/>
            <person name="Liang X."/>
            <person name="Jin J."/>
            <person name="Gao L."/>
            <person name="Zheng W."/>
            <person name="Hao B."/>
            <person name="Liu S.-M."/>
            <person name="Wang W."/>
            <person name="Yuan L."/>
            <person name="Cao M."/>
            <person name="McDermott J."/>
            <person name="Samudrala R."/>
            <person name="Wang J."/>
            <person name="Wong G.K.-S."/>
            <person name="Yang H."/>
        </authorList>
    </citation>
    <scope>NUCLEOTIDE SEQUENCE [LARGE SCALE GENOMIC DNA]</scope>
    <source>
        <strain>cv. Nipponbare</strain>
    </source>
</reference>
<reference key="5">
    <citation type="journal article" date="2003" name="Science">
        <title>Collection, mapping, and annotation of over 28,000 cDNA clones from japonica rice.</title>
        <authorList>
            <consortium name="The rice full-length cDNA consortium"/>
        </authorList>
    </citation>
    <scope>NUCLEOTIDE SEQUENCE [LARGE SCALE MRNA]</scope>
    <source>
        <strain>cv. Nipponbare</strain>
    </source>
</reference>
<reference key="6">
    <citation type="journal article" date="2006" name="Mol. Genet. Genomics">
        <title>Genome-wide analysis of cyclin family in rice (Oryza sativa L.).</title>
        <authorList>
            <person name="La H."/>
            <person name="Li J."/>
            <person name="Ji Z."/>
            <person name="Cheng Y."/>
            <person name="Li X."/>
            <person name="Jiang S."/>
            <person name="Venkatesh P.N."/>
            <person name="Ramachandran S."/>
        </authorList>
    </citation>
    <scope>GENE FAMILY</scope>
    <scope>NOMENCLATURE</scope>
</reference>
<accession>Q69S43</accession>
<accession>B7F7X8</accession>
<organism>
    <name type="scientific">Oryza sativa subsp. japonica</name>
    <name type="common">Rice</name>
    <dbReference type="NCBI Taxonomy" id="39947"/>
    <lineage>
        <taxon>Eukaryota</taxon>
        <taxon>Viridiplantae</taxon>
        <taxon>Streptophyta</taxon>
        <taxon>Embryophyta</taxon>
        <taxon>Tracheophyta</taxon>
        <taxon>Spermatophyta</taxon>
        <taxon>Magnoliopsida</taxon>
        <taxon>Liliopsida</taxon>
        <taxon>Poales</taxon>
        <taxon>Poaceae</taxon>
        <taxon>BOP clade</taxon>
        <taxon>Oryzoideae</taxon>
        <taxon>Oryzeae</taxon>
        <taxon>Oryzinae</taxon>
        <taxon>Oryza</taxon>
        <taxon>Oryza sativa</taxon>
    </lineage>
</organism>
<dbReference type="EMBL" id="AP005125">
    <property type="protein sequence ID" value="BAD30903.1"/>
    <property type="molecule type" value="Genomic_DNA"/>
</dbReference>
<dbReference type="EMBL" id="AP008213">
    <property type="protein sequence ID" value="BAF21875.1"/>
    <property type="molecule type" value="Genomic_DNA"/>
</dbReference>
<dbReference type="EMBL" id="AP014963">
    <property type="protein sequence ID" value="BAT02101.1"/>
    <property type="molecule type" value="Genomic_DNA"/>
</dbReference>
<dbReference type="EMBL" id="CM000144">
    <property type="protein sequence ID" value="EEE67394.1"/>
    <property type="molecule type" value="Genomic_DNA"/>
</dbReference>
<dbReference type="EMBL" id="AK121938">
    <property type="protein sequence ID" value="BAH00726.1"/>
    <property type="molecule type" value="mRNA"/>
</dbReference>
<dbReference type="RefSeq" id="XP_015645356.1">
    <property type="nucleotide sequence ID" value="XM_015789870.1"/>
</dbReference>
<dbReference type="SMR" id="Q69S43"/>
<dbReference type="FunCoup" id="Q69S43">
    <property type="interactions" value="325"/>
</dbReference>
<dbReference type="STRING" id="39947.Q69S43"/>
<dbReference type="PaxDb" id="39947-Q69S43"/>
<dbReference type="EnsemblPlants" id="Os07t0556000-01">
    <property type="protein sequence ID" value="Os07t0556000-01"/>
    <property type="gene ID" value="Os07g0556000"/>
</dbReference>
<dbReference type="Gramene" id="Os07t0556000-01">
    <property type="protein sequence ID" value="Os07t0556000-01"/>
    <property type="gene ID" value="Os07g0556000"/>
</dbReference>
<dbReference type="KEGG" id="dosa:Os07g0556000"/>
<dbReference type="eggNOG" id="KOG0656">
    <property type="taxonomic scope" value="Eukaryota"/>
</dbReference>
<dbReference type="HOGENOM" id="CLU_048040_3_0_1"/>
<dbReference type="InParanoid" id="Q69S43"/>
<dbReference type="OMA" id="PKPWVLR"/>
<dbReference type="OrthoDB" id="306099at2759"/>
<dbReference type="Proteomes" id="UP000000763">
    <property type="component" value="Chromosome 7"/>
</dbReference>
<dbReference type="Proteomes" id="UP000007752">
    <property type="component" value="Chromosome 7"/>
</dbReference>
<dbReference type="Proteomes" id="UP000059680">
    <property type="component" value="Chromosome 7"/>
</dbReference>
<dbReference type="GO" id="GO:0000307">
    <property type="term" value="C:cyclin-dependent protein kinase holoenzyme complex"/>
    <property type="evidence" value="ECO:0000318"/>
    <property type="project" value="GO_Central"/>
</dbReference>
<dbReference type="GO" id="GO:0005737">
    <property type="term" value="C:cytoplasm"/>
    <property type="evidence" value="ECO:0000318"/>
    <property type="project" value="GO_Central"/>
</dbReference>
<dbReference type="GO" id="GO:0005634">
    <property type="term" value="C:nucleus"/>
    <property type="evidence" value="ECO:0000318"/>
    <property type="project" value="GO_Central"/>
</dbReference>
<dbReference type="GO" id="GO:0016538">
    <property type="term" value="F:cyclin-dependent protein serine/threonine kinase regulator activity"/>
    <property type="evidence" value="ECO:0000318"/>
    <property type="project" value="GO_Central"/>
</dbReference>
<dbReference type="GO" id="GO:0051301">
    <property type="term" value="P:cell division"/>
    <property type="evidence" value="ECO:0007669"/>
    <property type="project" value="UniProtKB-KW"/>
</dbReference>
<dbReference type="GO" id="GO:0000082">
    <property type="term" value="P:G1/S transition of mitotic cell cycle"/>
    <property type="evidence" value="ECO:0000318"/>
    <property type="project" value="GO_Central"/>
</dbReference>
<dbReference type="FunFam" id="1.10.472.10:FF:000060">
    <property type="entry name" value="D6-type cyclin"/>
    <property type="match status" value="1"/>
</dbReference>
<dbReference type="Gene3D" id="1.10.472.10">
    <property type="entry name" value="Cyclin-like"/>
    <property type="match status" value="2"/>
</dbReference>
<dbReference type="InterPro" id="IPR039361">
    <property type="entry name" value="Cyclin"/>
</dbReference>
<dbReference type="InterPro" id="IPR013763">
    <property type="entry name" value="Cyclin-like_dom"/>
</dbReference>
<dbReference type="InterPro" id="IPR036915">
    <property type="entry name" value="Cyclin-like_sf"/>
</dbReference>
<dbReference type="InterPro" id="IPR006671">
    <property type="entry name" value="Cyclin_N"/>
</dbReference>
<dbReference type="PANTHER" id="PTHR10177">
    <property type="entry name" value="CYCLINS"/>
    <property type="match status" value="1"/>
</dbReference>
<dbReference type="Pfam" id="PF00134">
    <property type="entry name" value="Cyclin_N"/>
    <property type="match status" value="1"/>
</dbReference>
<dbReference type="SMART" id="SM00385">
    <property type="entry name" value="CYCLIN"/>
    <property type="match status" value="1"/>
</dbReference>
<dbReference type="SUPFAM" id="SSF47954">
    <property type="entry name" value="Cyclin-like"/>
    <property type="match status" value="1"/>
</dbReference>
<keyword id="KW-0131">Cell cycle</keyword>
<keyword id="KW-0132">Cell division</keyword>
<keyword id="KW-0195">Cyclin</keyword>
<keyword id="KW-1185">Reference proteome</keyword>
<name>CCD61_ORYSJ</name>
<feature type="chain" id="PRO_0000287038" description="Cyclin-D6-1">
    <location>
        <begin position="1"/>
        <end position="320"/>
    </location>
</feature>
<feature type="region of interest" description="Disordered" evidence="1">
    <location>
        <begin position="279"/>
        <end position="320"/>
    </location>
</feature>
<evidence type="ECO:0000256" key="1">
    <source>
        <dbReference type="SAM" id="MobiDB-lite"/>
    </source>
</evidence>
<evidence type="ECO:0000305" key="2"/>
<evidence type="ECO:0000312" key="3">
    <source>
        <dbReference type="EMBL" id="EEE67394.1"/>
    </source>
</evidence>
<protein>
    <recommendedName>
        <fullName>Cyclin-D6-1</fullName>
    </recommendedName>
    <alternativeName>
        <fullName>G1/S-specific cyclin-D6-1</fullName>
        <shortName>CycD6;1</shortName>
    </alternativeName>
</protein>
<gene>
    <name type="primary">CYCD6-1</name>
    <name type="ordered locus">Os07g0556000</name>
    <name type="ordered locus">LOC_Os07g37010</name>
    <name evidence="3" type="ORF">OsJ_24707</name>
    <name type="ORF">OSJNBa0058I18.18</name>
</gene>
<proteinExistence type="evidence at transcript level"/>